<accession>Q89270</accession>
<accession>Q77XX9</accession>
<keyword id="KW-0067">ATP-binding</keyword>
<keyword id="KW-0235">DNA replication</keyword>
<keyword id="KW-1048">Host nucleus</keyword>
<keyword id="KW-0547">Nucleotide-binding</keyword>
<keyword id="KW-1185">Reference proteome</keyword>
<evidence type="ECO:0000255" key="1">
    <source>
        <dbReference type="PROSITE-ProRule" id="PRU00551"/>
    </source>
</evidence>
<evidence type="ECO:0000256" key="2">
    <source>
        <dbReference type="SAM" id="MobiDB-lite"/>
    </source>
</evidence>
<evidence type="ECO:0000269" key="3">
    <source>
    </source>
</evidence>
<evidence type="ECO:0000269" key="4">
    <source>
    </source>
</evidence>
<evidence type="ECO:0000269" key="5">
    <source>
    </source>
</evidence>
<evidence type="ECO:0000269" key="6">
    <source>
    </source>
</evidence>
<gene>
    <name type="primary">Rep52</name>
</gene>
<organismHost>
    <name type="scientific">Mammalia</name>
    <dbReference type="NCBI Taxonomy" id="40674"/>
</organismHost>
<name>REP52_AAV2S</name>
<reference key="1">
    <citation type="journal article" date="1983" name="J. Virol.">
        <title>Nucleotide sequence and organization of the adeno-associated virus 2 genome.</title>
        <authorList>
            <person name="Srivastava A."/>
            <person name="Lusby E.W."/>
            <person name="Berns K.I."/>
        </authorList>
    </citation>
    <scope>NUCLEOTIDE SEQUENCE [GENOMIC DNA]</scope>
</reference>
<reference key="2">
    <citation type="journal article" date="1994" name="J. Gen. Virol.">
        <title>Mutations in the carboxy terminus of adeno-associated virus 2 capsid proteins affect viral infectivity: lack of an RGD integrin-binding motif.</title>
        <authorList>
            <person name="Ruffing M."/>
            <person name="Heid H."/>
            <person name="Kleinschmidt J.A."/>
        </authorList>
    </citation>
    <scope>NUCLEOTIDE SEQUENCE [GENOMIC DNA]</scope>
</reference>
<reference key="3">
    <citation type="submission" date="1998-01" db="EMBL/GenBank/DDBJ databases">
        <authorList>
            <person name="Berns K.I."/>
            <person name="Bohenzky R.A."/>
            <person name="Cassinotti P."/>
            <person name="Colvin D."/>
            <person name="Donahue B.A."/>
            <person name="Dull T."/>
            <person name="Horer M."/>
            <person name="Kleinschmidt J.A."/>
            <person name="Ruffing M."/>
            <person name="Snyder R.O."/>
            <person name="Tratschin J.-D."/>
            <person name="Weitz M."/>
        </authorList>
    </citation>
    <scope>NUCLEOTIDE SEQUENCE [GENOMIC DNA]</scope>
</reference>
<reference key="4">
    <citation type="journal article" date="1992" name="J. Virol.">
        <title>Colocalization of adeno-associated virus Rep and capsid proteins in the nuclei of infected cells.</title>
        <authorList>
            <person name="Hunter L.A."/>
            <person name="Samulski R.J."/>
        </authorList>
    </citation>
    <scope>SUBCELLULAR LOCATION</scope>
</reference>
<reference key="5">
    <citation type="journal article" date="1998" name="J. Virol.">
        <title>The Rep52 gene product of adeno-associated virus is a DNA helicase with 3'-to-5' polarity.</title>
        <authorList>
            <person name="Smith R.H."/>
            <person name="Kotin R.M."/>
        </authorList>
    </citation>
    <scope>FUNCTION</scope>
</reference>
<reference key="6">
    <citation type="journal article" date="1998" name="Mol. Cell. Biol.">
        <title>Inhibition of PrKX, a novel protein kinase, and the cyclic AMP-dependent protein kinase PKA by the regulatory proteins of adeno-associated virus type 2.</title>
        <authorList>
            <person name="Chiorini J.A."/>
            <person name="Zimmermann B."/>
            <person name="Yang L."/>
            <person name="Smith R.H."/>
            <person name="Ahearn A."/>
            <person name="Herberg F."/>
            <person name="Kotin R.M."/>
        </authorList>
    </citation>
    <scope>INTERACTION WITH HOST PRKX</scope>
</reference>
<reference key="7">
    <citation type="journal article" date="2001" name="EMBO J.">
        <title>DNA helicase-mediated packaging of adeno-associated virus type 2 genomes into preformed capsids.</title>
        <authorList>
            <person name="King J.A."/>
            <person name="Dubielzig R."/>
            <person name="Grimm D."/>
            <person name="Kleinschmidt J.A."/>
        </authorList>
    </citation>
    <scope>FUNCTION</scope>
</reference>
<organism>
    <name type="scientific">Adeno-associated virus 2 (isolate Srivastava/1982)</name>
    <name type="common">AAV-2</name>
    <dbReference type="NCBI Taxonomy" id="648242"/>
    <lineage>
        <taxon>Viruses</taxon>
        <taxon>Monodnaviria</taxon>
        <taxon>Shotokuvirae</taxon>
        <taxon>Cossaviricota</taxon>
        <taxon>Quintoviricetes</taxon>
        <taxon>Piccovirales</taxon>
        <taxon>Parvoviridae</taxon>
        <taxon>Parvovirinae</taxon>
        <taxon>Dependoparvovirus</taxon>
        <taxon>Dependoparvovirus primate1</taxon>
    </lineage>
</organism>
<protein>
    <recommendedName>
        <fullName>Protein Rep52</fullName>
    </recommendedName>
</protein>
<dbReference type="EMBL" id="J01901">
    <property type="protein sequence ID" value="AAA42375.1"/>
    <property type="molecule type" value="Genomic_DNA"/>
</dbReference>
<dbReference type="EMBL" id="AF043303">
    <property type="protein sequence ID" value="AAC03777.1"/>
    <property type="molecule type" value="Genomic_DNA"/>
</dbReference>
<dbReference type="RefSeq" id="YP_680425.1">
    <property type="nucleotide sequence ID" value="NC_001401.2"/>
</dbReference>
<dbReference type="SMR" id="Q89270"/>
<dbReference type="DNASU" id="1489607"/>
<dbReference type="KEGG" id="vg:1489607"/>
<dbReference type="Proteomes" id="UP000008469">
    <property type="component" value="Genome"/>
</dbReference>
<dbReference type="Proteomes" id="UP000180764">
    <property type="component" value="Segment"/>
</dbReference>
<dbReference type="GO" id="GO:0042025">
    <property type="term" value="C:host cell nucleus"/>
    <property type="evidence" value="ECO:0007669"/>
    <property type="project" value="UniProtKB-SubCell"/>
</dbReference>
<dbReference type="GO" id="GO:0005524">
    <property type="term" value="F:ATP binding"/>
    <property type="evidence" value="ECO:0007669"/>
    <property type="project" value="UniProtKB-KW"/>
</dbReference>
<dbReference type="GO" id="GO:0006260">
    <property type="term" value="P:DNA replication"/>
    <property type="evidence" value="ECO:0007669"/>
    <property type="project" value="UniProtKB-KW"/>
</dbReference>
<dbReference type="GO" id="GO:0019079">
    <property type="term" value="P:viral genome replication"/>
    <property type="evidence" value="ECO:0007669"/>
    <property type="project" value="InterPro"/>
</dbReference>
<dbReference type="FunFam" id="3.40.50.300:FF:003161">
    <property type="entry name" value="Protein Rep68"/>
    <property type="match status" value="1"/>
</dbReference>
<dbReference type="Gene3D" id="1.10.10.950">
    <property type="match status" value="1"/>
</dbReference>
<dbReference type="Gene3D" id="3.40.50.300">
    <property type="entry name" value="P-loop containing nucleotide triphosphate hydrolases"/>
    <property type="match status" value="1"/>
</dbReference>
<dbReference type="InterPro" id="IPR014015">
    <property type="entry name" value="Helicase_SF3_DNA-vir"/>
</dbReference>
<dbReference type="InterPro" id="IPR027417">
    <property type="entry name" value="P-loop_NTPase"/>
</dbReference>
<dbReference type="InterPro" id="IPR001257">
    <property type="entry name" value="Parvovirus_NS1_helicase"/>
</dbReference>
<dbReference type="Pfam" id="PF01057">
    <property type="entry name" value="Parvo_NS1"/>
    <property type="match status" value="1"/>
</dbReference>
<dbReference type="SUPFAM" id="SSF52540">
    <property type="entry name" value="P-loop containing nucleoside triphosphate hydrolases"/>
    <property type="match status" value="1"/>
</dbReference>
<dbReference type="PROSITE" id="PS51206">
    <property type="entry name" value="SF3_HELICASE_1"/>
    <property type="match status" value="1"/>
</dbReference>
<sequence length="397" mass="44774">MELVGWLVDKGITSEKQWIQEDQASYISFNAASNSRSQIKAALDNAGKIMSLTKTAPDYLVGQQPVEDISSNRIYKILELNGYDPQYAASVFLGWATKKFGKRNTIWLFGPATTGKTNIAEAIAHTVPFYGCVNWTNENFPFNDCVDKMVIWWEEGKMTAKVVESAKAILGGSKVRVDQKCKSSAQIDPTPVIVTSNTNMCAVIDGNSTTFEHQQPLQDRMFKFELTRRLDHDFGKVTKQEVKDFFRWAKDHVVEVEHEFYVKKGGAKKRPAPSDADISEPKRVRESVAQPSTSDAEASINYADRYQNKCSRHVGMNLMLFPCRQCERMNQNSNICFTHGQKDCLECFPVSESQPVSVVKKAYQKLCYIHHIMGKVPDACTACDLVNVDLDDCIFEQ</sequence>
<comment type="function">
    <text evidence="3 5">Plays a critical role during packaging of viral DNA into empty capsids, where they are thought to be part of the packaging motor complex. The single stranded genomic DNA is packaged in a 3' to 5' direction and requires the association between viral DNA and Rep40. Regulates host PKA activity by interacting with host PRKX as a mechanism to interfere with helper virus propagation and to promote its own replication.</text>
</comment>
<comment type="subunit">
    <text evidence="6">Homooligomer. Interacts with host PRKX.</text>
</comment>
<comment type="subcellular location">
    <subcellularLocation>
        <location evidence="4">Host nucleus</location>
    </subcellularLocation>
</comment>
<proteinExistence type="evidence at protein level"/>
<feature type="chain" id="PRO_0000428952" description="Protein Rep52">
    <location>
        <begin position="1"/>
        <end position="397"/>
    </location>
</feature>
<feature type="domain" description="SF3 helicase" evidence="1">
    <location>
        <begin position="84"/>
        <end position="239"/>
    </location>
</feature>
<feature type="region of interest" description="Disordered" evidence="2">
    <location>
        <begin position="265"/>
        <end position="296"/>
    </location>
</feature>
<feature type="binding site" evidence="1">
    <location>
        <begin position="110"/>
        <end position="117"/>
    </location>
    <ligand>
        <name>ATP</name>
        <dbReference type="ChEBI" id="CHEBI:30616"/>
    </ligand>
</feature>